<accession>P69795</accession>
<accession>P17409</accession>
<evidence type="ECO:0000255" key="1">
    <source>
        <dbReference type="PROSITE-ProRule" id="PRU00423"/>
    </source>
</evidence>
<evidence type="ECO:0000269" key="2">
    <source>
    </source>
</evidence>
<evidence type="ECO:0000269" key="3">
    <source>
    </source>
</evidence>
<evidence type="ECO:0000269" key="4">
    <source>
    </source>
</evidence>
<evidence type="ECO:0000269" key="5">
    <source>
    </source>
</evidence>
<evidence type="ECO:0000303" key="6">
    <source>
    </source>
</evidence>
<evidence type="ECO:0000303" key="7">
    <source>
    </source>
</evidence>
<evidence type="ECO:0000303" key="8">
    <source>
    </source>
</evidence>
<evidence type="ECO:0000305" key="9"/>
<evidence type="ECO:0000305" key="10">
    <source>
    </source>
</evidence>
<evidence type="ECO:0000305" key="11">
    <source>
    </source>
</evidence>
<evidence type="ECO:0000305" key="12">
    <source>
    </source>
</evidence>
<evidence type="ECO:0000305" key="13">
    <source>
    </source>
</evidence>
<evidence type="ECO:0000305" key="14">
    <source>
    </source>
</evidence>
<evidence type="ECO:0000305" key="15">
    <source>
    </source>
</evidence>
<evidence type="ECO:0007829" key="16">
    <source>
        <dbReference type="PDB" id="1E2B"/>
    </source>
</evidence>
<evidence type="ECO:0007829" key="17">
    <source>
        <dbReference type="PDB" id="1IIB"/>
    </source>
</evidence>
<dbReference type="EC" id="2.7.1.196" evidence="2 3"/>
<dbReference type="EMBL" id="X52890">
    <property type="protein sequence ID" value="CAA37069.1"/>
    <property type="molecule type" value="Genomic_DNA"/>
</dbReference>
<dbReference type="EMBL" id="U00096">
    <property type="protein sequence ID" value="AAC74808.1"/>
    <property type="molecule type" value="Genomic_DNA"/>
</dbReference>
<dbReference type="EMBL" id="AP009048">
    <property type="protein sequence ID" value="BAA15519.1"/>
    <property type="molecule type" value="Genomic_DNA"/>
</dbReference>
<dbReference type="PIR" id="S10870">
    <property type="entry name" value="S10870"/>
</dbReference>
<dbReference type="RefSeq" id="NP_416252.1">
    <property type="nucleotide sequence ID" value="NC_000913.3"/>
</dbReference>
<dbReference type="RefSeq" id="WP_000412169.1">
    <property type="nucleotide sequence ID" value="NZ_STEB01000009.1"/>
</dbReference>
<dbReference type="PDB" id="1E2B">
    <property type="method" value="NMR"/>
    <property type="chains" value="A=1-106"/>
</dbReference>
<dbReference type="PDB" id="1H9C">
    <property type="method" value="NMR"/>
    <property type="chains" value="A=1-106"/>
</dbReference>
<dbReference type="PDB" id="1IIB">
    <property type="method" value="X-ray"/>
    <property type="resolution" value="1.80 A"/>
    <property type="chains" value="A/B=1-106"/>
</dbReference>
<dbReference type="PDB" id="2WWV">
    <property type="method" value="NMR"/>
    <property type="chains" value="D=3-105"/>
</dbReference>
<dbReference type="PDB" id="2WY2">
    <property type="method" value="NMR"/>
    <property type="chains" value="D=3-105"/>
</dbReference>
<dbReference type="PDBsum" id="1E2B"/>
<dbReference type="PDBsum" id="1H9C"/>
<dbReference type="PDBsum" id="1IIB"/>
<dbReference type="PDBsum" id="2WWV"/>
<dbReference type="PDBsum" id="2WY2"/>
<dbReference type="BMRB" id="P69795"/>
<dbReference type="SMR" id="P69795"/>
<dbReference type="BioGRID" id="4260316">
    <property type="interactions" value="18"/>
</dbReference>
<dbReference type="ComplexPortal" id="CPX-4683">
    <property type="entry name" value="N,N'-diacetylchitobiose-specific enzyme II complex"/>
</dbReference>
<dbReference type="FunCoup" id="P69795">
    <property type="interactions" value="103"/>
</dbReference>
<dbReference type="IntAct" id="P69795">
    <property type="interactions" value="2"/>
</dbReference>
<dbReference type="STRING" id="511145.b1738"/>
<dbReference type="DrugBank" id="DB03544">
    <property type="generic name" value="S-Phosphocysteine"/>
</dbReference>
<dbReference type="TCDB" id="4.A.3.2.1">
    <property type="family name" value="the pts lactose-n,n'-diacetylchitobiose-Beta-glucoside (lac) family"/>
</dbReference>
<dbReference type="iPTMnet" id="P69795"/>
<dbReference type="jPOST" id="P69795"/>
<dbReference type="PaxDb" id="511145-b1738"/>
<dbReference type="EnsemblBacteria" id="AAC74808">
    <property type="protein sequence ID" value="AAC74808"/>
    <property type="gene ID" value="b1738"/>
</dbReference>
<dbReference type="GeneID" id="93775951"/>
<dbReference type="GeneID" id="945339"/>
<dbReference type="KEGG" id="ecj:JW1727"/>
<dbReference type="KEGG" id="eco:b1738"/>
<dbReference type="KEGG" id="ecoc:C3026_09930"/>
<dbReference type="PATRIC" id="fig|1411691.4.peg.518"/>
<dbReference type="EchoBASE" id="EB0138"/>
<dbReference type="eggNOG" id="COG1440">
    <property type="taxonomic scope" value="Bacteria"/>
</dbReference>
<dbReference type="HOGENOM" id="CLU_147323_2_0_6"/>
<dbReference type="InParanoid" id="P69795"/>
<dbReference type="OMA" id="YKIWAVS"/>
<dbReference type="OrthoDB" id="9808134at2"/>
<dbReference type="PhylomeDB" id="P69795"/>
<dbReference type="BioCyc" id="EcoCyc:CELA-MONOMER"/>
<dbReference type="BioCyc" id="MetaCyc:CELA-MONOMER"/>
<dbReference type="BRENDA" id="2.7.1.196">
    <property type="organism ID" value="2026"/>
</dbReference>
<dbReference type="EvolutionaryTrace" id="P69795"/>
<dbReference type="PRO" id="PR:P69795"/>
<dbReference type="Proteomes" id="UP000000625">
    <property type="component" value="Chromosome"/>
</dbReference>
<dbReference type="GO" id="GO:0005829">
    <property type="term" value="C:cytosol"/>
    <property type="evidence" value="ECO:0000314"/>
    <property type="project" value="EcoCyc"/>
</dbReference>
<dbReference type="GO" id="GO:1902495">
    <property type="term" value="C:transmembrane transporter complex"/>
    <property type="evidence" value="ECO:0000303"/>
    <property type="project" value="ComplexPortal"/>
</dbReference>
<dbReference type="GO" id="GO:0016301">
    <property type="term" value="F:kinase activity"/>
    <property type="evidence" value="ECO:0007669"/>
    <property type="project" value="UniProtKB-KW"/>
</dbReference>
<dbReference type="GO" id="GO:0008982">
    <property type="term" value="F:protein-N(PI)-phosphohistidine-sugar phosphotransferase activity"/>
    <property type="evidence" value="ECO:0007669"/>
    <property type="project" value="InterPro"/>
</dbReference>
<dbReference type="GO" id="GO:0090566">
    <property type="term" value="F:protein-phosphocysteine-N,N'-diacetylchitobiose phosphotransferase system transporter activity"/>
    <property type="evidence" value="ECO:0000314"/>
    <property type="project" value="EcoCyc"/>
</dbReference>
<dbReference type="GO" id="GO:0090563">
    <property type="term" value="F:protein-phosphocysteine-sugar phosphotransferase activity"/>
    <property type="evidence" value="ECO:0000318"/>
    <property type="project" value="GO_Central"/>
</dbReference>
<dbReference type="GO" id="GO:1902815">
    <property type="term" value="P:N,N'-diacetylchitobiose import"/>
    <property type="evidence" value="ECO:0000314"/>
    <property type="project" value="EcoCyc"/>
</dbReference>
<dbReference type="GO" id="GO:0009401">
    <property type="term" value="P:phosphoenolpyruvate-dependent sugar phosphotransferase system"/>
    <property type="evidence" value="ECO:0000314"/>
    <property type="project" value="EcoCyc"/>
</dbReference>
<dbReference type="CDD" id="cd05564">
    <property type="entry name" value="PTS_IIB_chitobiose_lichenan"/>
    <property type="match status" value="1"/>
</dbReference>
<dbReference type="FunFam" id="3.40.50.2300:FF:000017">
    <property type="entry name" value="PTS sugar transporter subunit IIB"/>
    <property type="match status" value="1"/>
</dbReference>
<dbReference type="Gene3D" id="3.40.50.2300">
    <property type="match status" value="1"/>
</dbReference>
<dbReference type="InterPro" id="IPR036095">
    <property type="entry name" value="PTS_EIIB-like_sf"/>
</dbReference>
<dbReference type="InterPro" id="IPR003501">
    <property type="entry name" value="PTS_EIIB_2/3"/>
</dbReference>
<dbReference type="InterPro" id="IPR013012">
    <property type="entry name" value="PTS_EIIB_3"/>
</dbReference>
<dbReference type="InterPro" id="IPR051819">
    <property type="entry name" value="PTS_sugar-specific_EIIB"/>
</dbReference>
<dbReference type="NCBIfam" id="NF007796">
    <property type="entry name" value="PRK10499.1"/>
    <property type="match status" value="1"/>
</dbReference>
<dbReference type="NCBIfam" id="TIGR00853">
    <property type="entry name" value="pts-lac"/>
    <property type="match status" value="1"/>
</dbReference>
<dbReference type="PANTHER" id="PTHR34581">
    <property type="entry name" value="PTS SYSTEM N,N'-DIACETYLCHITOBIOSE-SPECIFIC EIIB COMPONENT"/>
    <property type="match status" value="1"/>
</dbReference>
<dbReference type="PANTHER" id="PTHR34581:SF2">
    <property type="entry name" value="PTS SYSTEM N,N'-DIACETYLCHITOBIOSE-SPECIFIC EIIB COMPONENT"/>
    <property type="match status" value="1"/>
</dbReference>
<dbReference type="Pfam" id="PF02302">
    <property type="entry name" value="PTS_IIB"/>
    <property type="match status" value="1"/>
</dbReference>
<dbReference type="SUPFAM" id="SSF52794">
    <property type="entry name" value="PTS system IIB component-like"/>
    <property type="match status" value="1"/>
</dbReference>
<dbReference type="PROSITE" id="PS51100">
    <property type="entry name" value="PTS_EIIB_TYPE_3"/>
    <property type="match status" value="1"/>
</dbReference>
<protein>
    <recommendedName>
        <fullName evidence="6">PTS system N,N'-diacetylchitobiose-specific EIIB component</fullName>
    </recommendedName>
    <alternativeName>
        <fullName evidence="6">EIIB-Chb</fullName>
    </alternativeName>
    <alternativeName>
        <fullName evidence="6">IVcel</fullName>
    </alternativeName>
    <alternativeName>
        <fullName evidence="6">N,N'-diacetylchitobiose-specific phosphotransferase enzyme IIB component</fullName>
        <ecNumber evidence="2 3">2.7.1.196</ecNumber>
    </alternativeName>
</protein>
<reference key="1">
    <citation type="journal article" date="1990" name="Genetics">
        <title>Characterization and nucleotide sequence of the cryptic cel operon of Escherichia coli K12.</title>
        <authorList>
            <person name="Parker L.L."/>
            <person name="Hall B.G."/>
        </authorList>
    </citation>
    <scope>NUCLEOTIDE SEQUENCE [GENOMIC DNA]</scope>
    <scope>GENE NAME</scope>
    <source>
        <strain>K12</strain>
    </source>
</reference>
<reference key="2">
    <citation type="journal article" date="1996" name="DNA Res.">
        <title>A 570-kb DNA sequence of the Escherichia coli K-12 genome corresponding to the 28.0-40.1 min region on the linkage map.</title>
        <authorList>
            <person name="Aiba H."/>
            <person name="Baba T."/>
            <person name="Fujita K."/>
            <person name="Hayashi K."/>
            <person name="Inada T."/>
            <person name="Isono K."/>
            <person name="Itoh T."/>
            <person name="Kasai H."/>
            <person name="Kashimoto K."/>
            <person name="Kimura S."/>
            <person name="Kitakawa M."/>
            <person name="Kitagawa M."/>
            <person name="Makino K."/>
            <person name="Miki T."/>
            <person name="Mizobuchi K."/>
            <person name="Mori H."/>
            <person name="Mori T."/>
            <person name="Motomura K."/>
            <person name="Nakade S."/>
            <person name="Nakamura Y."/>
            <person name="Nashimoto H."/>
            <person name="Nishio Y."/>
            <person name="Oshima T."/>
            <person name="Saito N."/>
            <person name="Sampei G."/>
            <person name="Seki Y."/>
            <person name="Sivasundaram S."/>
            <person name="Tagami H."/>
            <person name="Takeda J."/>
            <person name="Takemoto K."/>
            <person name="Takeuchi Y."/>
            <person name="Wada C."/>
            <person name="Yamamoto Y."/>
            <person name="Horiuchi T."/>
        </authorList>
    </citation>
    <scope>NUCLEOTIDE SEQUENCE [LARGE SCALE GENOMIC DNA]</scope>
    <source>
        <strain>K12 / W3110 / ATCC 27325 / DSM 5911</strain>
    </source>
</reference>
<reference key="3">
    <citation type="journal article" date="1997" name="Science">
        <title>The complete genome sequence of Escherichia coli K-12.</title>
        <authorList>
            <person name="Blattner F.R."/>
            <person name="Plunkett G. III"/>
            <person name="Bloch C.A."/>
            <person name="Perna N.T."/>
            <person name="Burland V."/>
            <person name="Riley M."/>
            <person name="Collado-Vides J."/>
            <person name="Glasner J.D."/>
            <person name="Rode C.K."/>
            <person name="Mayhew G.F."/>
            <person name="Gregor J."/>
            <person name="Davis N.W."/>
            <person name="Kirkpatrick H.A."/>
            <person name="Goeden M.A."/>
            <person name="Rose D.J."/>
            <person name="Mau B."/>
            <person name="Shao Y."/>
        </authorList>
    </citation>
    <scope>NUCLEOTIDE SEQUENCE [LARGE SCALE GENOMIC DNA]</scope>
    <source>
        <strain>K12 / MG1655 / ATCC 47076</strain>
    </source>
</reference>
<reference key="4">
    <citation type="journal article" date="2006" name="Mol. Syst. Biol.">
        <title>Highly accurate genome sequences of Escherichia coli K-12 strains MG1655 and W3110.</title>
        <authorList>
            <person name="Hayashi K."/>
            <person name="Morooka N."/>
            <person name="Yamamoto Y."/>
            <person name="Fujita K."/>
            <person name="Isono K."/>
            <person name="Choi S."/>
            <person name="Ohtsubo E."/>
            <person name="Baba T."/>
            <person name="Wanner B.L."/>
            <person name="Mori H."/>
            <person name="Horiuchi T."/>
        </authorList>
    </citation>
    <scope>NUCLEOTIDE SEQUENCE [LARGE SCALE GENOMIC DNA]</scope>
    <source>
        <strain>K12 / W3110 / ATCC 27325 / DSM 5911</strain>
    </source>
</reference>
<reference key="5">
    <citation type="journal article" date="1990" name="Res. Microbiol.">
        <title>The cellobiose permease of Escherichia coli consists of three proteins and is homologous to the lactose permease of Staphylococcus aureus.</title>
        <authorList>
            <person name="Reizer J."/>
            <person name="Reizer A."/>
            <person name="Saier M.H. Jr."/>
        </authorList>
    </citation>
    <scope>FUNCTION</scope>
    <scope>ACTIVE SITE</scope>
</reference>
<reference key="6">
    <citation type="journal article" date="1997" name="Proc. Natl. Acad. Sci. U.S.A.">
        <title>Wild-type Escherichia coli grows on the chitin disaccharide, N,N'-diacetylchitobiose, by expressing the cel operon.</title>
        <authorList>
            <person name="Keyhani N.O."/>
            <person name="Roseman S."/>
        </authorList>
    </citation>
    <scope>IDENTIFICATION OF CHB OPERON</scope>
</reference>
<reference key="7">
    <citation type="journal article" date="2000" name="J. Biol. Chem.">
        <title>The chitin disaccharide, N,N'-diacetylchitobiose, is catabolized by Escherichia coli and is transported/phosphorylated by the phosphoenolpyruvate:glycose phosphotransferase system.</title>
        <authorList>
            <person name="Keyhani N.O."/>
            <person name="Wang L.-X."/>
            <person name="Lee Y.C."/>
            <person name="Roseman S."/>
        </authorList>
    </citation>
    <scope>FUNCTION</scope>
    <scope>CATALYTIC ACTIVITY</scope>
    <scope>INDUCTION</scope>
    <scope>SUBSTRATE SPECIFICITY</scope>
</reference>
<reference key="8">
    <citation type="journal article" date="2000" name="J. Biol. Chem.">
        <title>The transport/phosphorylation of N,N'-diacetylchitobiose in Escherichia coli. Characterization of phospho-IIB(Chb) and of a potential transition state analogue in the phosphotransfer reaction between the proteins IIA(Chb) and IIB(Chb).</title>
        <authorList>
            <person name="Keyhani N.O."/>
            <person name="Bacia K."/>
            <person name="Roseman S."/>
        </authorList>
    </citation>
    <scope>FUNCTION</scope>
    <scope>CATALYTIC ACTIVITY</scope>
    <scope>MUTAGENESIS OF CYS-10</scope>
    <scope>ACTIVE SITE</scope>
    <scope>SUBUNIT</scope>
</reference>
<reference key="9">
    <citation type="journal article" date="2000" name="J. Biol. Chem.">
        <title>Analytical sedimentation of the IIAChb and IIBChb proteins of the Escherichia coli N,N'-diacetylchitobiose phosphotransferase system. Demonstration of a model phosphotransfer transition state complex.</title>
        <authorList>
            <person name="Keyhani N.O."/>
            <person name="Rodgers M.E."/>
            <person name="Demeler B."/>
            <person name="Hansen J.C."/>
            <person name="Roseman S."/>
        </authorList>
    </citation>
    <scope>MUTAGENESIS OF CYS-10</scope>
    <scope>ACTIVE SITE</scope>
    <scope>SUBUNIT</scope>
</reference>
<reference key="10">
    <citation type="journal article" date="1994" name="Protein Sci.">
        <title>Enzyme IIBcellobiose of the phosphoenol-pyruvate-dependent phosphotransferase system of Escherichia coli: backbone assignment and secondary structure determined by three-dimensional NMR spectroscopy.</title>
        <authorList>
            <person name="Ab E."/>
            <person name="Schuurman-Wolters G.K."/>
            <person name="Saier M.H. Jr."/>
            <person name="Reizer J."/>
            <person name="Jacuinod M."/>
            <person name="Roepstorff P."/>
            <person name="Dijkstra K."/>
            <person name="Scheek R.M."/>
            <person name="Robillard G.T."/>
        </authorList>
    </citation>
    <scope>STRUCTURE BY NMR</scope>
    <scope>ACTIVE SITE</scope>
</reference>
<reference key="11">
    <citation type="journal article" date="1997" name="Protein Sci.">
        <title>The NMR side-chain assignments and solution structure of enzyme IIBcellobiose of the phosphoenolpyruvate-dependent phosphotransferase system of Escherichia coli.</title>
        <authorList>
            <person name="Ab E."/>
            <person name="Schuurman-Wolters G.K."/>
            <person name="Reizer J."/>
            <person name="Saier M.H. Jr."/>
            <person name="Dijkstra K."/>
            <person name="Scheek R.M."/>
            <person name="Robillard G.T."/>
        </authorList>
    </citation>
    <scope>STRUCTURE BY NMR OF MUTANT SER-10</scope>
    <scope>ACTIVE SITE</scope>
</reference>
<reference key="12">
    <citation type="journal article" date="1997" name="Structure">
        <title>The structure of an energy-coupling protein from bacteria, IIBcellobiose, reveals similarity to eukaryotic protein tyrosine phosphatases.</title>
        <authorList>
            <person name="van Montfort R.L.M."/>
            <person name="Pijning T."/>
            <person name="Kalk K.H."/>
            <person name="Reizer J."/>
            <person name="Saier M.H. Jr."/>
            <person name="Thunnissen M.M.G.M."/>
            <person name="Robillard G.T."/>
            <person name="Dijkstra B.W."/>
        </authorList>
    </citation>
    <scope>X-RAY CRYSTALLOGRAPHY (1.8 ANGSTROMS) OF MUTANT SER-10</scope>
    <scope>ACTIVE SITE</scope>
</reference>
<reference key="13">
    <citation type="journal article" date="2001" name="J. Mol. Biol.">
        <title>NMR structure of cysteinyl-phosphorylated enzyme IIB of the N,N'-diacetylchitobiose-specific phosphoenolpyruvate-dependent phosphotransferase system of Escherichia coli.</title>
        <authorList>
            <person name="Ab E."/>
            <person name="Schuurman-Wolters G.K."/>
            <person name="Nijlant D."/>
            <person name="Dijkstra K."/>
            <person name="Saier M.H."/>
            <person name="Robillard G.T."/>
            <person name="Scheek R.M."/>
        </authorList>
    </citation>
    <scope>STRUCTURE BY NMR</scope>
    <scope>PHOSPHORYLATION AT CYS-10</scope>
</reference>
<reference key="14">
    <citation type="journal article" date="2010" name="J. Biol. Chem.">
        <title>Solution structure of the IIAChitobiose-IIBChitobiose complex of the N,N'-diacetylchitobiose branch of the Escherichia coli phosphotransferase system.</title>
        <authorList>
            <person name="Jung Y.S."/>
            <person name="Cai M."/>
            <person name="Clore G.M."/>
        </authorList>
    </citation>
    <scope>STRUCTURE BY NMR OF 3-105 OF MUTANT SER-10</scope>
    <scope>ACTIVE SITE</scope>
    <scope>SUBUNIT</scope>
</reference>
<gene>
    <name evidence="8" type="primary">chbB</name>
    <name evidence="7" type="synonym">celA</name>
    <name type="ordered locus">b1738</name>
    <name type="ordered locus">JW1727</name>
</gene>
<keyword id="KW-0002">3D-structure</keyword>
<keyword id="KW-0963">Cytoplasm</keyword>
<keyword id="KW-0418">Kinase</keyword>
<keyword id="KW-0597">Phosphoprotein</keyword>
<keyword id="KW-0598">Phosphotransferase system</keyword>
<keyword id="KW-1185">Reference proteome</keyword>
<keyword id="KW-0762">Sugar transport</keyword>
<keyword id="KW-0808">Transferase</keyword>
<keyword id="KW-0813">Transport</keyword>
<organism>
    <name type="scientific">Escherichia coli (strain K12)</name>
    <dbReference type="NCBI Taxonomy" id="83333"/>
    <lineage>
        <taxon>Bacteria</taxon>
        <taxon>Pseudomonadati</taxon>
        <taxon>Pseudomonadota</taxon>
        <taxon>Gammaproteobacteria</taxon>
        <taxon>Enterobacterales</taxon>
        <taxon>Enterobacteriaceae</taxon>
        <taxon>Escherichia</taxon>
    </lineage>
</organism>
<comment type="function">
    <text evidence="2 3 12">The phosphoenolpyruvate-dependent sugar phosphotransferase system (sugar PTS), a major carbohydrate active transport system, catalyzes the phosphorylation of incoming sugar substrates concomitantly with their translocation across the cell membrane. The enzyme II ChbABC PTS system is involved in the transport of the chitin disaccharide N,N'-diacetylchitobiose (GlcNAc2) (PubMed:10913117). Also able to use N,N',N''-triacetyl chitotriose (GlcNAc3) (PubMed:10913117, PubMed:10913119).</text>
</comment>
<comment type="catalytic activity">
    <reaction evidence="2 3">
        <text>N,N'-diacetylchitobiose(out) + N(pros)-phospho-L-histidyl-[protein] = diacetylchitobiose-6'-phosphate(in) + L-histidyl-[protein]</text>
        <dbReference type="Rhea" id="RHEA:33423"/>
        <dbReference type="Rhea" id="RHEA-COMP:9745"/>
        <dbReference type="Rhea" id="RHEA-COMP:9746"/>
        <dbReference type="ChEBI" id="CHEBI:28681"/>
        <dbReference type="ChEBI" id="CHEBI:29979"/>
        <dbReference type="ChEBI" id="CHEBI:64837"/>
        <dbReference type="ChEBI" id="CHEBI:64883"/>
        <dbReference type="EC" id="2.7.1.196"/>
    </reaction>
</comment>
<comment type="subunit">
    <text evidence="3 4 5">Forms a complex with ChbA (EIIA) (PubMed:10913119, PubMed:10913122, PubMed:19959833). ChbB is a monomer in both its unphosphorylated and phosphorylated forms (PubMed:10913122).</text>
</comment>
<comment type="interaction">
    <interactant intactId="EBI-1128186">
        <id>P69795</id>
    </interactant>
    <interactant intactId="EBI-1121924">
        <id>P69791</id>
        <label>chbA</label>
    </interactant>
    <organismsDiffer>false</organismsDiffer>
    <experiments>2</experiments>
</comment>
<comment type="subcellular location">
    <subcellularLocation>
        <location evidence="9">Cytoplasm</location>
    </subcellularLocation>
</comment>
<comment type="induction">
    <text evidence="2">By GlcNAc2, GlcNAc3 and beta-N,N'-diacetylchitobiose (Me-TCB).</text>
</comment>
<comment type="domain">
    <text evidence="1">The PTS EIIB type-3 domain is phosphorylated by phospho-EIIA on a cysteinyl residue. Then, it transfers the phosphoryl group to the sugar substrate concomitantly with the sugar uptake processed by the PTS EIIC type-3 domain.</text>
</comment>
<comment type="caution">
    <text evidence="12">Was originally (PubMed:2092358) characterized as part of a cryptic cel operon for a cellobiose degradation system. The Cel+ phenotype is due to mutations making expression chitobiose-independent and altering the substrate specificity.</text>
</comment>
<proteinExistence type="evidence at protein level"/>
<name>PTQB_ECOLI</name>
<feature type="chain" id="PRO_0000186489" description="PTS system N,N'-diacetylchitobiose-specific EIIB component">
    <location>
        <begin position="1"/>
        <end position="106"/>
    </location>
</feature>
<feature type="domain" description="PTS EIIB type-3" evidence="1">
    <location>
        <begin position="3"/>
        <end position="106"/>
    </location>
</feature>
<feature type="active site" description="Phosphocysteine intermediate" evidence="3 4 11 12 13 14 15">
    <location>
        <position position="10"/>
    </location>
</feature>
<feature type="modified residue" description="Phosphocysteine; by EIIA" evidence="1 10">
    <location>
        <position position="10"/>
    </location>
</feature>
<feature type="mutagenesis site" description="Unable to be phosphorylated by EIIA." evidence="3 4">
    <original>C</original>
    <variation>S</variation>
    <location>
        <position position="10"/>
    </location>
</feature>
<feature type="strand" evidence="17">
    <location>
        <begin position="4"/>
        <end position="11"/>
    </location>
</feature>
<feature type="helix" evidence="17">
    <location>
        <begin position="13"/>
        <end position="29"/>
    </location>
</feature>
<feature type="strand" evidence="17">
    <location>
        <begin position="34"/>
        <end position="40"/>
    </location>
</feature>
<feature type="helix" evidence="17">
    <location>
        <begin position="41"/>
        <end position="43"/>
    </location>
</feature>
<feature type="helix" evidence="17">
    <location>
        <begin position="44"/>
        <end position="48"/>
    </location>
</feature>
<feature type="strand" evidence="17">
    <location>
        <begin position="52"/>
        <end position="56"/>
    </location>
</feature>
<feature type="helix" evidence="17">
    <location>
        <begin position="58"/>
        <end position="63"/>
    </location>
</feature>
<feature type="helix" evidence="17">
    <location>
        <begin position="64"/>
        <end position="70"/>
    </location>
</feature>
<feature type="strand" evidence="16">
    <location>
        <begin position="71"/>
        <end position="74"/>
    </location>
</feature>
<feature type="strand" evidence="17">
    <location>
        <begin position="76"/>
        <end position="78"/>
    </location>
</feature>
<feature type="helix" evidence="17">
    <location>
        <begin position="81"/>
        <end position="85"/>
    </location>
</feature>
<feature type="helix" evidence="17">
    <location>
        <begin position="89"/>
        <end position="104"/>
    </location>
</feature>
<sequence length="106" mass="11427">MEKKHIYLFCSAGMSTSLLVSKMRAQAEKYEVPVIIEAFPETLAGEKGQNADVVLLGPQIAYMLPEIQRLLPNKPVEVIDSLLYGKVDGLGVLKAAVAAIKKAAAN</sequence>